<proteinExistence type="inferred from homology"/>
<evidence type="ECO:0000250" key="1"/>
<evidence type="ECO:0000255" key="2">
    <source>
        <dbReference type="PROSITE-ProRule" id="PRU01251"/>
    </source>
</evidence>
<evidence type="ECO:0000256" key="3">
    <source>
        <dbReference type="SAM" id="MobiDB-lite"/>
    </source>
</evidence>
<evidence type="ECO:0000305" key="4"/>
<keyword id="KW-0067">ATP-binding</keyword>
<keyword id="KW-0143">Chaperone</keyword>
<keyword id="KW-0175">Coiled coil</keyword>
<keyword id="KW-0963">Cytoplasm</keyword>
<keyword id="KW-0547">Nucleotide-binding</keyword>
<keyword id="KW-0677">Repeat</keyword>
<keyword id="KW-0346">Stress response</keyword>
<feature type="chain" id="PRO_0000191168" description="Chaperone protein ClpB">
    <location>
        <begin position="1"/>
        <end position="879"/>
    </location>
</feature>
<feature type="domain" description="Clp R" evidence="2">
    <location>
        <begin position="3"/>
        <end position="148"/>
    </location>
</feature>
<feature type="region of interest" description="Repeat 1" evidence="2">
    <location>
        <begin position="6"/>
        <end position="71"/>
    </location>
</feature>
<feature type="region of interest" description="Repeat 2" evidence="2">
    <location>
        <begin position="84"/>
        <end position="148"/>
    </location>
</feature>
<feature type="region of interest" description="NBD1" evidence="1">
    <location>
        <begin position="161"/>
        <end position="342"/>
    </location>
</feature>
<feature type="region of interest" description="Linker" evidence="1">
    <location>
        <begin position="343"/>
        <end position="546"/>
    </location>
</feature>
<feature type="region of interest" description="NBD2" evidence="1">
    <location>
        <begin position="556"/>
        <end position="766"/>
    </location>
</feature>
<feature type="region of interest" description="C-terminal" evidence="1">
    <location>
        <begin position="767"/>
        <end position="879"/>
    </location>
</feature>
<feature type="region of interest" description="Disordered" evidence="3">
    <location>
        <begin position="858"/>
        <end position="879"/>
    </location>
</feature>
<feature type="coiled-coil region" evidence="1">
    <location>
        <begin position="393"/>
        <end position="525"/>
    </location>
</feature>
<feature type="binding site" evidence="1">
    <location>
        <begin position="208"/>
        <end position="215"/>
    </location>
    <ligand>
        <name>ATP</name>
        <dbReference type="ChEBI" id="CHEBI:30616"/>
        <label>1</label>
    </ligand>
</feature>
<feature type="binding site" evidence="1">
    <location>
        <begin position="606"/>
        <end position="613"/>
    </location>
    <ligand>
        <name>ATP</name>
        <dbReference type="ChEBI" id="CHEBI:30616"/>
        <label>2</label>
    </ligand>
</feature>
<protein>
    <recommendedName>
        <fullName>Chaperone protein ClpB</fullName>
    </recommendedName>
</protein>
<reference key="1">
    <citation type="journal article" date="2004" name="Nat. Biotechnol.">
        <title>Complete genome sequence of the metabolically versatile photosynthetic bacterium Rhodopseudomonas palustris.</title>
        <authorList>
            <person name="Larimer F.W."/>
            <person name="Chain P."/>
            <person name="Hauser L."/>
            <person name="Lamerdin J.E."/>
            <person name="Malfatti S."/>
            <person name="Do L."/>
            <person name="Land M.L."/>
            <person name="Pelletier D.A."/>
            <person name="Beatty J.T."/>
            <person name="Lang A.S."/>
            <person name="Tabita F.R."/>
            <person name="Gibson J.L."/>
            <person name="Hanson T.E."/>
            <person name="Bobst C."/>
            <person name="Torres y Torres J.L."/>
            <person name="Peres C."/>
            <person name="Harrison F.H."/>
            <person name="Gibson J."/>
            <person name="Harwood C.S."/>
        </authorList>
    </citation>
    <scope>NUCLEOTIDE SEQUENCE [LARGE SCALE GENOMIC DNA]</scope>
    <source>
        <strain>ATCC BAA-98 / CGA009</strain>
    </source>
</reference>
<comment type="function">
    <text evidence="1">Part of a stress-induced multi-chaperone system, it is involved in the recovery of the cell from heat-induced damage, in cooperation with DnaK, DnaJ and GrpE. Acts before DnaK, in the processing of protein aggregates. Protein binding stimulates the ATPase activity; ATP hydrolysis unfolds the denatured protein aggregates, which probably helps expose new hydrophobic binding sites on the surface of ClpB-bound aggregates, contributing to the solubilization and refolding of denatured protein aggregates by DnaK (By similarity).</text>
</comment>
<comment type="subunit">
    <text evidence="1">Homohexamer. The oligomerization is ATP-dependent (By similarity).</text>
</comment>
<comment type="subcellular location">
    <subcellularLocation>
        <location evidence="4">Cytoplasm</location>
    </subcellularLocation>
</comment>
<comment type="domain">
    <text evidence="1">The Clp repeat (R) domain probably functions as a substrate-discriminating domain, recruiting aggregated proteins to the ClpB hexamer and/or stabilizing bound proteins. The NBD2 domain is responsible for oligomerization, whereas the NBD1 domain stabilizes the hexamer probably in an ATP-dependent manner. The movement of the coiled-coil domain is essential for ClpB ability to rescue proteins from an aggregated state, probably by pulling apart large aggregated proteins, which are bound between the coiled-coils motifs of adjacent ClpB subunits in the functional hexamer (By similarity).</text>
</comment>
<comment type="similarity">
    <text evidence="4">Belongs to the ClpA/ClpB family.</text>
</comment>
<organism>
    <name type="scientific">Rhodopseudomonas palustris (strain ATCC BAA-98 / CGA009)</name>
    <dbReference type="NCBI Taxonomy" id="258594"/>
    <lineage>
        <taxon>Bacteria</taxon>
        <taxon>Pseudomonadati</taxon>
        <taxon>Pseudomonadota</taxon>
        <taxon>Alphaproteobacteria</taxon>
        <taxon>Hyphomicrobiales</taxon>
        <taxon>Nitrobacteraceae</taxon>
        <taxon>Rhodopseudomonas</taxon>
    </lineage>
</organism>
<accession>Q6N1H2</accession>
<gene>
    <name type="primary">clpB</name>
    <name type="ordered locus">RPA4433</name>
</gene>
<dbReference type="EMBL" id="BX572607">
    <property type="protein sequence ID" value="CAE29874.1"/>
    <property type="molecule type" value="Genomic_DNA"/>
</dbReference>
<dbReference type="RefSeq" id="WP_011159967.1">
    <property type="nucleotide sequence ID" value="NZ_CP116810.1"/>
</dbReference>
<dbReference type="SMR" id="Q6N1H2"/>
<dbReference type="STRING" id="258594.RPA4433"/>
<dbReference type="GeneID" id="66895574"/>
<dbReference type="eggNOG" id="COG0542">
    <property type="taxonomic scope" value="Bacteria"/>
</dbReference>
<dbReference type="HOGENOM" id="CLU_005070_4_0_5"/>
<dbReference type="PhylomeDB" id="Q6N1H2"/>
<dbReference type="GO" id="GO:0005737">
    <property type="term" value="C:cytoplasm"/>
    <property type="evidence" value="ECO:0007669"/>
    <property type="project" value="UniProtKB-SubCell"/>
</dbReference>
<dbReference type="GO" id="GO:0005524">
    <property type="term" value="F:ATP binding"/>
    <property type="evidence" value="ECO:0007669"/>
    <property type="project" value="UniProtKB-KW"/>
</dbReference>
<dbReference type="GO" id="GO:0016887">
    <property type="term" value="F:ATP hydrolysis activity"/>
    <property type="evidence" value="ECO:0007669"/>
    <property type="project" value="InterPro"/>
</dbReference>
<dbReference type="GO" id="GO:0034605">
    <property type="term" value="P:cellular response to heat"/>
    <property type="evidence" value="ECO:0007669"/>
    <property type="project" value="TreeGrafter"/>
</dbReference>
<dbReference type="GO" id="GO:0042026">
    <property type="term" value="P:protein refolding"/>
    <property type="evidence" value="ECO:0007669"/>
    <property type="project" value="InterPro"/>
</dbReference>
<dbReference type="CDD" id="cd00009">
    <property type="entry name" value="AAA"/>
    <property type="match status" value="1"/>
</dbReference>
<dbReference type="CDD" id="cd19499">
    <property type="entry name" value="RecA-like_ClpB_Hsp104-like"/>
    <property type="match status" value="1"/>
</dbReference>
<dbReference type="FunFam" id="1.10.8.60:FF:000017">
    <property type="entry name" value="ATP-dependent chaperone ClpB"/>
    <property type="match status" value="1"/>
</dbReference>
<dbReference type="FunFam" id="3.40.50.300:FF:000120">
    <property type="entry name" value="ATP-dependent chaperone ClpB"/>
    <property type="match status" value="1"/>
</dbReference>
<dbReference type="FunFam" id="3.40.50.300:FF:000025">
    <property type="entry name" value="ATP-dependent Clp protease subunit"/>
    <property type="match status" value="1"/>
</dbReference>
<dbReference type="FunFam" id="3.40.50.300:FF:000010">
    <property type="entry name" value="Chaperone clpB 1, putative"/>
    <property type="match status" value="1"/>
</dbReference>
<dbReference type="Gene3D" id="1.10.8.60">
    <property type="match status" value="1"/>
</dbReference>
<dbReference type="Gene3D" id="1.10.1780.10">
    <property type="entry name" value="Clp, N-terminal domain"/>
    <property type="match status" value="1"/>
</dbReference>
<dbReference type="Gene3D" id="3.40.50.300">
    <property type="entry name" value="P-loop containing nucleotide triphosphate hydrolases"/>
    <property type="match status" value="3"/>
</dbReference>
<dbReference type="InterPro" id="IPR003593">
    <property type="entry name" value="AAA+_ATPase"/>
</dbReference>
<dbReference type="InterPro" id="IPR003959">
    <property type="entry name" value="ATPase_AAA_core"/>
</dbReference>
<dbReference type="InterPro" id="IPR017730">
    <property type="entry name" value="Chaperonin_ClpB"/>
</dbReference>
<dbReference type="InterPro" id="IPR019489">
    <property type="entry name" value="Clp_ATPase_C"/>
</dbReference>
<dbReference type="InterPro" id="IPR036628">
    <property type="entry name" value="Clp_N_dom_sf"/>
</dbReference>
<dbReference type="InterPro" id="IPR004176">
    <property type="entry name" value="Clp_R_dom"/>
</dbReference>
<dbReference type="InterPro" id="IPR001270">
    <property type="entry name" value="ClpA/B"/>
</dbReference>
<dbReference type="InterPro" id="IPR018368">
    <property type="entry name" value="ClpA/B_CS1"/>
</dbReference>
<dbReference type="InterPro" id="IPR028299">
    <property type="entry name" value="ClpA/B_CS2"/>
</dbReference>
<dbReference type="InterPro" id="IPR041546">
    <property type="entry name" value="ClpA/ClpB_AAA_lid"/>
</dbReference>
<dbReference type="InterPro" id="IPR050130">
    <property type="entry name" value="ClpA_ClpB"/>
</dbReference>
<dbReference type="InterPro" id="IPR027417">
    <property type="entry name" value="P-loop_NTPase"/>
</dbReference>
<dbReference type="NCBIfam" id="TIGR03346">
    <property type="entry name" value="chaperone_ClpB"/>
    <property type="match status" value="1"/>
</dbReference>
<dbReference type="PANTHER" id="PTHR11638">
    <property type="entry name" value="ATP-DEPENDENT CLP PROTEASE"/>
    <property type="match status" value="1"/>
</dbReference>
<dbReference type="PANTHER" id="PTHR11638:SF18">
    <property type="entry name" value="HEAT SHOCK PROTEIN 104"/>
    <property type="match status" value="1"/>
</dbReference>
<dbReference type="Pfam" id="PF00004">
    <property type="entry name" value="AAA"/>
    <property type="match status" value="1"/>
</dbReference>
<dbReference type="Pfam" id="PF07724">
    <property type="entry name" value="AAA_2"/>
    <property type="match status" value="1"/>
</dbReference>
<dbReference type="Pfam" id="PF17871">
    <property type="entry name" value="AAA_lid_9"/>
    <property type="match status" value="1"/>
</dbReference>
<dbReference type="Pfam" id="PF02861">
    <property type="entry name" value="Clp_N"/>
    <property type="match status" value="2"/>
</dbReference>
<dbReference type="Pfam" id="PF10431">
    <property type="entry name" value="ClpB_D2-small"/>
    <property type="match status" value="1"/>
</dbReference>
<dbReference type="PRINTS" id="PR00300">
    <property type="entry name" value="CLPPROTEASEA"/>
</dbReference>
<dbReference type="SMART" id="SM00382">
    <property type="entry name" value="AAA"/>
    <property type="match status" value="2"/>
</dbReference>
<dbReference type="SMART" id="SM01086">
    <property type="entry name" value="ClpB_D2-small"/>
    <property type="match status" value="1"/>
</dbReference>
<dbReference type="SUPFAM" id="SSF81923">
    <property type="entry name" value="Double Clp-N motif"/>
    <property type="match status" value="1"/>
</dbReference>
<dbReference type="SUPFAM" id="SSF52540">
    <property type="entry name" value="P-loop containing nucleoside triphosphate hydrolases"/>
    <property type="match status" value="2"/>
</dbReference>
<dbReference type="PROSITE" id="PS51903">
    <property type="entry name" value="CLP_R"/>
    <property type="match status" value="1"/>
</dbReference>
<dbReference type="PROSITE" id="PS00870">
    <property type="entry name" value="CLPAB_1"/>
    <property type="match status" value="1"/>
</dbReference>
<dbReference type="PROSITE" id="PS00871">
    <property type="entry name" value="CLPAB_2"/>
    <property type="match status" value="1"/>
</dbReference>
<sequence length="879" mass="96671">MNVEKYTERVRGFIQSAQSLAMREGHQQFSPLHILKVLLDDSEGLAGGLIDRAGGNSRAILKATEEALGKMPKVSGSGAGQVYLAPATARAFDAAEKAAEKAGDSFVTVERLLLALSLDKDSEAGQLLTKGGVTPQNLNAAINALRKGRTADSATAENAYDALKKYARDLTQAARDGKLDPVIGRDEEIRRTIQVLSRRTKNNPVLIGEPGVGKTAIVEGLALRILNGDVPESLKDKKLLALDMGALIAGAKYRGEFEERLKAVLNEVTAAEGGIILFIDEMHTLVGAGKADGAMDASNLLKPALARGELHCIGATTLDEYRKHVEKDAALARRFQPVFVSEPTVEDTVSILRGLKDKYEQHHGVRIADSALVAAVTLSNRYITDRFLPDKAIDLMDEAAARLKMQVDSKPEELDSMDREIVRLKIEQEALKKETDPGSKARLVTLEKELADLEEKSAALTQRWSAEKNKLSDAQKLKSELDALRIELANAQRRGEYQRAGELAYGRIPELEKKIAEIEANENSGAMVEEAVTANHIAQVVSRWTGVPVDKMLEGEKEKLLRMEEQLGQRVVGQFEAVHAVSTAVRRARAGLQDPNRPMGSFMFLGPTGVGKTELTKALAEYLFDDETAMVRIDMSEFMEKHSVARLIGAPPGYVGYDEGGVLTEAVRRRPYQVILFDEIEKAHPDVFNVLLQVLDDGRLTDGQGRTVDFRNTLIVMTSNLGSEYLVNQPEGEDTGAVREQVMGMVRAHFRPEFLNRVDEIILFHRLQKSEMGRIVDIQFARLTKLLEDRKIVLDLDAAARDWLAEKGWDPAYGARPLKRVIQRSVQDPLAEMILEGSVKDGDHVAISAEGGVLTFNGKPPHTAEVEPFTGRPPKRMLN</sequence>
<name>CLPB_RHOPA</name>